<organism>
    <name type="scientific">Acinetobacter baumannii (strain AB307-0294)</name>
    <dbReference type="NCBI Taxonomy" id="557600"/>
    <lineage>
        <taxon>Bacteria</taxon>
        <taxon>Pseudomonadati</taxon>
        <taxon>Pseudomonadota</taxon>
        <taxon>Gammaproteobacteria</taxon>
        <taxon>Moraxellales</taxon>
        <taxon>Moraxellaceae</taxon>
        <taxon>Acinetobacter</taxon>
        <taxon>Acinetobacter calcoaceticus/baumannii complex</taxon>
    </lineage>
</organism>
<protein>
    <recommendedName>
        <fullName evidence="1">4-hydroxy-3-methylbut-2-en-1-yl diphosphate synthase (flavodoxin)</fullName>
        <ecNumber evidence="1">1.17.7.3</ecNumber>
    </recommendedName>
    <alternativeName>
        <fullName evidence="1">1-hydroxy-2-methyl-2-(E)-butenyl 4-diphosphate synthase</fullName>
    </alternativeName>
</protein>
<evidence type="ECO:0000255" key="1">
    <source>
        <dbReference type="HAMAP-Rule" id="MF_00159"/>
    </source>
</evidence>
<sequence>MIENPIKRRPTRKIRVGSVYVGGDAPISVQSMTNTETCDVDATVAQIERCVDAGADIMRVSVPSMEAAEAFGAIRKRVSVPLVADIHFDHRIALAVADYGADCLRINPGNIGSDQKVREVVAAARHHGISMRIGVNAGSLEKDLQKKYGEPTGQALLESALRHIDILDRLDFHEFKVSVKASNVFLTMDAYRLLSQQIDNPLHLGVTEAGIYRTGTVKSAIALGGLLMEGIGDTMRISLAAEPEDEIKIGFDILKSLGLRSNGINFIACPSCSRQEFNVIQVMQALEERLEDIRTPMDVSVIGCKVNGPGEAKEADIGVVGAAPRSLVYRNGEKSHLIDTNQLVDEIETMVRQRVQELEEAKSKEIIRSSS</sequence>
<proteinExistence type="inferred from homology"/>
<keyword id="KW-0004">4Fe-4S</keyword>
<keyword id="KW-0408">Iron</keyword>
<keyword id="KW-0411">Iron-sulfur</keyword>
<keyword id="KW-0414">Isoprene biosynthesis</keyword>
<keyword id="KW-0479">Metal-binding</keyword>
<keyword id="KW-0560">Oxidoreductase</keyword>
<gene>
    <name evidence="1" type="primary">ispG</name>
    <name type="ordered locus">ABBFA_003033</name>
</gene>
<dbReference type="EC" id="1.17.7.3" evidence="1"/>
<dbReference type="EMBL" id="CP001172">
    <property type="protein sequence ID" value="ACJ58210.1"/>
    <property type="molecule type" value="Genomic_DNA"/>
</dbReference>
<dbReference type="RefSeq" id="WP_000572095.1">
    <property type="nucleotide sequence ID" value="NZ_CP001172.1"/>
</dbReference>
<dbReference type="SMR" id="B7H069"/>
<dbReference type="GeneID" id="92892505"/>
<dbReference type="HOGENOM" id="CLU_042258_0_0_6"/>
<dbReference type="UniPathway" id="UPA00056">
    <property type="reaction ID" value="UER00096"/>
</dbReference>
<dbReference type="Proteomes" id="UP000006924">
    <property type="component" value="Chromosome"/>
</dbReference>
<dbReference type="GO" id="GO:0051539">
    <property type="term" value="F:4 iron, 4 sulfur cluster binding"/>
    <property type="evidence" value="ECO:0007669"/>
    <property type="project" value="UniProtKB-UniRule"/>
</dbReference>
<dbReference type="GO" id="GO:0046429">
    <property type="term" value="F:4-hydroxy-3-methylbut-2-en-1-yl diphosphate synthase activity (ferredoxin)"/>
    <property type="evidence" value="ECO:0007669"/>
    <property type="project" value="UniProtKB-UniRule"/>
</dbReference>
<dbReference type="GO" id="GO:0141197">
    <property type="term" value="F:4-hydroxy-3-methylbut-2-enyl-diphosphate synthase activity (flavodoxin)"/>
    <property type="evidence" value="ECO:0007669"/>
    <property type="project" value="UniProtKB-EC"/>
</dbReference>
<dbReference type="GO" id="GO:0005506">
    <property type="term" value="F:iron ion binding"/>
    <property type="evidence" value="ECO:0007669"/>
    <property type="project" value="InterPro"/>
</dbReference>
<dbReference type="GO" id="GO:0019288">
    <property type="term" value="P:isopentenyl diphosphate biosynthetic process, methylerythritol 4-phosphate pathway"/>
    <property type="evidence" value="ECO:0007669"/>
    <property type="project" value="UniProtKB-UniRule"/>
</dbReference>
<dbReference type="GO" id="GO:0016114">
    <property type="term" value="P:terpenoid biosynthetic process"/>
    <property type="evidence" value="ECO:0007669"/>
    <property type="project" value="InterPro"/>
</dbReference>
<dbReference type="FunFam" id="3.20.20.20:FF:000001">
    <property type="entry name" value="4-hydroxy-3-methylbut-2-en-1-yl diphosphate synthase (flavodoxin)"/>
    <property type="match status" value="1"/>
</dbReference>
<dbReference type="Gene3D" id="3.20.20.20">
    <property type="entry name" value="Dihydropteroate synthase-like"/>
    <property type="match status" value="1"/>
</dbReference>
<dbReference type="Gene3D" id="3.30.413.10">
    <property type="entry name" value="Sulfite Reductase Hemoprotein, domain 1"/>
    <property type="match status" value="1"/>
</dbReference>
<dbReference type="HAMAP" id="MF_00159">
    <property type="entry name" value="IspG"/>
    <property type="match status" value="1"/>
</dbReference>
<dbReference type="InterPro" id="IPR011005">
    <property type="entry name" value="Dihydropteroate_synth-like_sf"/>
</dbReference>
<dbReference type="InterPro" id="IPR016425">
    <property type="entry name" value="IspG_bac"/>
</dbReference>
<dbReference type="InterPro" id="IPR004588">
    <property type="entry name" value="IspG_bac-typ"/>
</dbReference>
<dbReference type="InterPro" id="IPR045854">
    <property type="entry name" value="NO2/SO3_Rdtase_4Fe4S_sf"/>
</dbReference>
<dbReference type="NCBIfam" id="TIGR00612">
    <property type="entry name" value="ispG_gcpE"/>
    <property type="match status" value="1"/>
</dbReference>
<dbReference type="NCBIfam" id="NF001540">
    <property type="entry name" value="PRK00366.1"/>
    <property type="match status" value="1"/>
</dbReference>
<dbReference type="PANTHER" id="PTHR30454">
    <property type="entry name" value="4-HYDROXY-3-METHYLBUT-2-EN-1-YL DIPHOSPHATE SYNTHASE"/>
    <property type="match status" value="1"/>
</dbReference>
<dbReference type="PANTHER" id="PTHR30454:SF0">
    <property type="entry name" value="4-HYDROXY-3-METHYLBUT-2-EN-1-YL DIPHOSPHATE SYNTHASE (FERREDOXIN), CHLOROPLASTIC"/>
    <property type="match status" value="1"/>
</dbReference>
<dbReference type="Pfam" id="PF04551">
    <property type="entry name" value="GcpE"/>
    <property type="match status" value="1"/>
</dbReference>
<dbReference type="PIRSF" id="PIRSF004640">
    <property type="entry name" value="IspG"/>
    <property type="match status" value="1"/>
</dbReference>
<dbReference type="SUPFAM" id="SSF51717">
    <property type="entry name" value="Dihydropteroate synthetase-like"/>
    <property type="match status" value="1"/>
</dbReference>
<dbReference type="SUPFAM" id="SSF56014">
    <property type="entry name" value="Nitrite and sulphite reductase 4Fe-4S domain-like"/>
    <property type="match status" value="1"/>
</dbReference>
<feature type="chain" id="PRO_1000118158" description="4-hydroxy-3-methylbut-2-en-1-yl diphosphate synthase (flavodoxin)">
    <location>
        <begin position="1"/>
        <end position="371"/>
    </location>
</feature>
<feature type="binding site" evidence="1">
    <location>
        <position position="269"/>
    </location>
    <ligand>
        <name>[4Fe-4S] cluster</name>
        <dbReference type="ChEBI" id="CHEBI:49883"/>
    </ligand>
</feature>
<feature type="binding site" evidence="1">
    <location>
        <position position="272"/>
    </location>
    <ligand>
        <name>[4Fe-4S] cluster</name>
        <dbReference type="ChEBI" id="CHEBI:49883"/>
    </ligand>
</feature>
<feature type="binding site" evidence="1">
    <location>
        <position position="304"/>
    </location>
    <ligand>
        <name>[4Fe-4S] cluster</name>
        <dbReference type="ChEBI" id="CHEBI:49883"/>
    </ligand>
</feature>
<feature type="binding site" evidence="1">
    <location>
        <position position="311"/>
    </location>
    <ligand>
        <name>[4Fe-4S] cluster</name>
        <dbReference type="ChEBI" id="CHEBI:49883"/>
    </ligand>
</feature>
<reference key="1">
    <citation type="journal article" date="2008" name="J. Bacteriol.">
        <title>Comparative genome sequence analysis of multidrug-resistant Acinetobacter baumannii.</title>
        <authorList>
            <person name="Adams M.D."/>
            <person name="Goglin K."/>
            <person name="Molyneaux N."/>
            <person name="Hujer K.M."/>
            <person name="Lavender H."/>
            <person name="Jamison J.J."/>
            <person name="MacDonald I.J."/>
            <person name="Martin K.M."/>
            <person name="Russo T."/>
            <person name="Campagnari A.A."/>
            <person name="Hujer A.M."/>
            <person name="Bonomo R.A."/>
            <person name="Gill S.R."/>
        </authorList>
    </citation>
    <scope>NUCLEOTIDE SEQUENCE [LARGE SCALE GENOMIC DNA]</scope>
    <source>
        <strain>AB307-0294</strain>
    </source>
</reference>
<name>ISPG_ACIB3</name>
<accession>B7H069</accession>
<comment type="function">
    <text evidence="1">Converts 2C-methyl-D-erythritol 2,4-cyclodiphosphate (ME-2,4cPP) into 1-hydroxy-2-methyl-2-(E)-butenyl 4-diphosphate.</text>
</comment>
<comment type="catalytic activity">
    <reaction evidence="1">
        <text>(2E)-4-hydroxy-3-methylbut-2-enyl diphosphate + oxidized [flavodoxin] + H2O + 2 H(+) = 2-C-methyl-D-erythritol 2,4-cyclic diphosphate + reduced [flavodoxin]</text>
        <dbReference type="Rhea" id="RHEA:43604"/>
        <dbReference type="Rhea" id="RHEA-COMP:10622"/>
        <dbReference type="Rhea" id="RHEA-COMP:10623"/>
        <dbReference type="ChEBI" id="CHEBI:15377"/>
        <dbReference type="ChEBI" id="CHEBI:15378"/>
        <dbReference type="ChEBI" id="CHEBI:57618"/>
        <dbReference type="ChEBI" id="CHEBI:58210"/>
        <dbReference type="ChEBI" id="CHEBI:58483"/>
        <dbReference type="ChEBI" id="CHEBI:128753"/>
        <dbReference type="EC" id="1.17.7.3"/>
    </reaction>
</comment>
<comment type="cofactor">
    <cofactor evidence="1">
        <name>[4Fe-4S] cluster</name>
        <dbReference type="ChEBI" id="CHEBI:49883"/>
    </cofactor>
    <text evidence="1">Binds 1 [4Fe-4S] cluster.</text>
</comment>
<comment type="pathway">
    <text evidence="1">Isoprenoid biosynthesis; isopentenyl diphosphate biosynthesis via DXP pathway; isopentenyl diphosphate from 1-deoxy-D-xylulose 5-phosphate: step 5/6.</text>
</comment>
<comment type="similarity">
    <text evidence="1">Belongs to the IspG family.</text>
</comment>